<protein>
    <recommendedName>
        <fullName>Putative defensin-like protein 53</fullName>
    </recommendedName>
</protein>
<accession>P0CAY2</accession>
<keyword id="KW-0929">Antimicrobial</keyword>
<keyword id="KW-1015">Disulfide bond</keyword>
<keyword id="KW-0295">Fungicide</keyword>
<keyword id="KW-0611">Plant defense</keyword>
<keyword id="KW-1185">Reference proteome</keyword>
<sequence length="53" mass="6173">MFSQNICMWRDCFARCSPGYYERFECFHDCITKGYDDGNCVPGPKTGRCCCTR</sequence>
<evidence type="ECO:0000250" key="1"/>
<evidence type="ECO:0000305" key="2"/>
<organism>
    <name type="scientific">Arabidopsis thaliana</name>
    <name type="common">Mouse-ear cress</name>
    <dbReference type="NCBI Taxonomy" id="3702"/>
    <lineage>
        <taxon>Eukaryota</taxon>
        <taxon>Viridiplantae</taxon>
        <taxon>Streptophyta</taxon>
        <taxon>Embryophyta</taxon>
        <taxon>Tracheophyta</taxon>
        <taxon>Spermatophyta</taxon>
        <taxon>Magnoliopsida</taxon>
        <taxon>eudicotyledons</taxon>
        <taxon>Gunneridae</taxon>
        <taxon>Pentapetalae</taxon>
        <taxon>rosids</taxon>
        <taxon>malvids</taxon>
        <taxon>Brassicales</taxon>
        <taxon>Brassicaceae</taxon>
        <taxon>Camelineae</taxon>
        <taxon>Arabidopsis</taxon>
    </lineage>
</organism>
<gene>
    <name type="ordered locus">At2g34135</name>
    <name type="ORF">T14G11</name>
</gene>
<name>DEF53_ARATH</name>
<reference key="1">
    <citation type="journal article" date="1999" name="Nature">
        <title>Sequence and analysis of chromosome 2 of the plant Arabidopsis thaliana.</title>
        <authorList>
            <person name="Lin X."/>
            <person name="Kaul S."/>
            <person name="Rounsley S.D."/>
            <person name="Shea T.P."/>
            <person name="Benito M.-I."/>
            <person name="Town C.D."/>
            <person name="Fujii C.Y."/>
            <person name="Mason T.M."/>
            <person name="Bowman C.L."/>
            <person name="Barnstead M.E."/>
            <person name="Feldblyum T.V."/>
            <person name="Buell C.R."/>
            <person name="Ketchum K.A."/>
            <person name="Lee J.J."/>
            <person name="Ronning C.M."/>
            <person name="Koo H.L."/>
            <person name="Moffat K.S."/>
            <person name="Cronin L.A."/>
            <person name="Shen M."/>
            <person name="Pai G."/>
            <person name="Van Aken S."/>
            <person name="Umayam L."/>
            <person name="Tallon L.J."/>
            <person name="Gill J.E."/>
            <person name="Adams M.D."/>
            <person name="Carrera A.J."/>
            <person name="Creasy T.H."/>
            <person name="Goodman H.M."/>
            <person name="Somerville C.R."/>
            <person name="Copenhaver G.P."/>
            <person name="Preuss D."/>
            <person name="Nierman W.C."/>
            <person name="White O."/>
            <person name="Eisen J.A."/>
            <person name="Salzberg S.L."/>
            <person name="Fraser C.M."/>
            <person name="Venter J.C."/>
        </authorList>
    </citation>
    <scope>NUCLEOTIDE SEQUENCE [LARGE SCALE GENOMIC DNA]</scope>
    <source>
        <strain>cv. Columbia</strain>
    </source>
</reference>
<reference key="2">
    <citation type="journal article" date="2017" name="Plant J.">
        <title>Araport11: a complete reannotation of the Arabidopsis thaliana reference genome.</title>
        <authorList>
            <person name="Cheng C.Y."/>
            <person name="Krishnakumar V."/>
            <person name="Chan A.P."/>
            <person name="Thibaud-Nissen F."/>
            <person name="Schobel S."/>
            <person name="Town C.D."/>
        </authorList>
    </citation>
    <scope>GENOME REANNOTATION</scope>
    <source>
        <strain>cv. Columbia</strain>
    </source>
</reference>
<reference key="3">
    <citation type="journal article" date="2005" name="Plant Physiol.">
        <title>Genome organization of more than 300 defensin-like genes in Arabidopsis.</title>
        <authorList>
            <person name="Silverstein K.A.T."/>
            <person name="Graham M.A."/>
            <person name="Paape T.D."/>
            <person name="VandenBosch K.A."/>
        </authorList>
    </citation>
    <scope>GENE FAMILY</scope>
</reference>
<proteinExistence type="uncertain"/>
<feature type="chain" id="PRO_0000379633" description="Putative defensin-like protein 53">
    <location>
        <begin position="1"/>
        <end position="53"/>
    </location>
</feature>
<feature type="disulfide bond" evidence="1">
    <location>
        <begin position="12"/>
        <end position="51"/>
    </location>
</feature>
<feature type="disulfide bond" evidence="1">
    <location>
        <begin position="16"/>
        <end position="40"/>
    </location>
</feature>
<feature type="disulfide bond" evidence="1">
    <location>
        <begin position="26"/>
        <end position="49"/>
    </location>
</feature>
<feature type="disulfide bond" evidence="1">
    <location>
        <begin position="30"/>
        <end position="50"/>
    </location>
</feature>
<dbReference type="EMBL" id="AC002341">
    <property type="status" value="NOT_ANNOTATED_CDS"/>
    <property type="molecule type" value="Genomic_DNA"/>
</dbReference>
<dbReference type="EMBL" id="CP002685">
    <property type="status" value="NOT_ANNOTATED_CDS"/>
    <property type="molecule type" value="Genomic_DNA"/>
</dbReference>
<dbReference type="SMR" id="P0CAY2"/>
<dbReference type="Araport" id="AT2G34135"/>
<dbReference type="TAIR" id="AT2G34135"/>
<dbReference type="InParanoid" id="P0CAY2"/>
<dbReference type="Proteomes" id="UP000006548">
    <property type="component" value="Chromosome 2"/>
</dbReference>
<dbReference type="GO" id="GO:0050832">
    <property type="term" value="P:defense response to fungus"/>
    <property type="evidence" value="ECO:0007669"/>
    <property type="project" value="UniProtKB-KW"/>
</dbReference>
<dbReference type="GO" id="GO:0031640">
    <property type="term" value="P:killing of cells of another organism"/>
    <property type="evidence" value="ECO:0007669"/>
    <property type="project" value="UniProtKB-KW"/>
</dbReference>
<dbReference type="InterPro" id="IPR056373">
    <property type="entry name" value="Defensin-like_dom"/>
</dbReference>
<dbReference type="Pfam" id="PF24552">
    <property type="entry name" value="Defensin"/>
    <property type="match status" value="1"/>
</dbReference>
<comment type="similarity">
    <text evidence="2">Belongs to the DEFL family.</text>
</comment>
<comment type="caution">
    <text evidence="2">Could be the product of a pseudogene. Lacks the signal peptide, which is a conserved features of the family.</text>
</comment>